<keyword id="KW-0456">Lyase</keyword>
<keyword id="KW-0460">Magnesium</keyword>
<keyword id="KW-0464">Manganese</keyword>
<keyword id="KW-0479">Metal-binding</keyword>
<keyword id="KW-1185">Reference proteome</keyword>
<keyword id="KW-0686">Riboflavin biosynthesis</keyword>
<reference key="1">
    <citation type="journal article" date="2003" name="Proc. Natl. Acad. Sci. U.S.A.">
        <title>The complete genome sequence of the carcinogenic bacterium Helicobacter hepaticus.</title>
        <authorList>
            <person name="Suerbaum S."/>
            <person name="Josenhans C."/>
            <person name="Sterzenbach T."/>
            <person name="Drescher B."/>
            <person name="Brandt P."/>
            <person name="Bell M."/>
            <person name="Droege M."/>
            <person name="Fartmann B."/>
            <person name="Fischer H.-P."/>
            <person name="Ge Z."/>
            <person name="Hoerster A."/>
            <person name="Holland R."/>
            <person name="Klein K."/>
            <person name="Koenig J."/>
            <person name="Macko L."/>
            <person name="Mendz G.L."/>
            <person name="Nyakatura G."/>
            <person name="Schauer D.B."/>
            <person name="Shen Z."/>
            <person name="Weber J."/>
            <person name="Frosch M."/>
            <person name="Fox J.G."/>
        </authorList>
    </citation>
    <scope>NUCLEOTIDE SEQUENCE [LARGE SCALE GENOMIC DNA]</scope>
    <source>
        <strain>ATCC 51449 / 3B1</strain>
    </source>
</reference>
<dbReference type="EC" id="4.1.99.12"/>
<dbReference type="EMBL" id="AE017125">
    <property type="protein sequence ID" value="AAP76805.1"/>
    <property type="molecule type" value="Genomic_DNA"/>
</dbReference>
<dbReference type="RefSeq" id="WP_011115051.1">
    <property type="nucleotide sequence ID" value="NC_004917.1"/>
</dbReference>
<dbReference type="SMR" id="Q7VJN5"/>
<dbReference type="STRING" id="235279.HH_0208"/>
<dbReference type="KEGG" id="hhe:HH_0208"/>
<dbReference type="eggNOG" id="COG0108">
    <property type="taxonomic scope" value="Bacteria"/>
</dbReference>
<dbReference type="HOGENOM" id="CLU_020273_1_2_7"/>
<dbReference type="OrthoDB" id="9793111at2"/>
<dbReference type="UniPathway" id="UPA00275">
    <property type="reaction ID" value="UER00399"/>
</dbReference>
<dbReference type="Proteomes" id="UP000002495">
    <property type="component" value="Chromosome"/>
</dbReference>
<dbReference type="GO" id="GO:0005829">
    <property type="term" value="C:cytosol"/>
    <property type="evidence" value="ECO:0007669"/>
    <property type="project" value="TreeGrafter"/>
</dbReference>
<dbReference type="GO" id="GO:0008686">
    <property type="term" value="F:3,4-dihydroxy-2-butanone-4-phosphate synthase activity"/>
    <property type="evidence" value="ECO:0007669"/>
    <property type="project" value="UniProtKB-UniRule"/>
</dbReference>
<dbReference type="GO" id="GO:0003935">
    <property type="term" value="F:GTP cyclohydrolase II activity"/>
    <property type="evidence" value="ECO:0007669"/>
    <property type="project" value="TreeGrafter"/>
</dbReference>
<dbReference type="GO" id="GO:0000287">
    <property type="term" value="F:magnesium ion binding"/>
    <property type="evidence" value="ECO:0007669"/>
    <property type="project" value="UniProtKB-UniRule"/>
</dbReference>
<dbReference type="GO" id="GO:0030145">
    <property type="term" value="F:manganese ion binding"/>
    <property type="evidence" value="ECO:0007669"/>
    <property type="project" value="UniProtKB-UniRule"/>
</dbReference>
<dbReference type="GO" id="GO:0009231">
    <property type="term" value="P:riboflavin biosynthetic process"/>
    <property type="evidence" value="ECO:0007669"/>
    <property type="project" value="UniProtKB-UniRule"/>
</dbReference>
<dbReference type="FunFam" id="3.90.870.10:FF:000001">
    <property type="entry name" value="Riboflavin biosynthesis protein RibBA"/>
    <property type="match status" value="1"/>
</dbReference>
<dbReference type="Gene3D" id="3.90.870.10">
    <property type="entry name" value="DHBP synthase"/>
    <property type="match status" value="1"/>
</dbReference>
<dbReference type="HAMAP" id="MF_00180">
    <property type="entry name" value="RibB"/>
    <property type="match status" value="1"/>
</dbReference>
<dbReference type="InterPro" id="IPR017945">
    <property type="entry name" value="DHBP_synth_RibB-like_a/b_dom"/>
</dbReference>
<dbReference type="InterPro" id="IPR000422">
    <property type="entry name" value="DHBP_synthase_RibB"/>
</dbReference>
<dbReference type="InterPro" id="IPR032677">
    <property type="entry name" value="GTP_cyclohydro_II"/>
</dbReference>
<dbReference type="InterPro" id="IPR036144">
    <property type="entry name" value="RibA-like_sf"/>
</dbReference>
<dbReference type="NCBIfam" id="NF006804">
    <property type="entry name" value="PRK09314.1"/>
    <property type="match status" value="1"/>
</dbReference>
<dbReference type="NCBIfam" id="TIGR00506">
    <property type="entry name" value="ribB"/>
    <property type="match status" value="1"/>
</dbReference>
<dbReference type="PANTHER" id="PTHR21327:SF18">
    <property type="entry name" value="3,4-DIHYDROXY-2-BUTANONE 4-PHOSPHATE SYNTHASE"/>
    <property type="match status" value="1"/>
</dbReference>
<dbReference type="PANTHER" id="PTHR21327">
    <property type="entry name" value="GTP CYCLOHYDROLASE II-RELATED"/>
    <property type="match status" value="1"/>
</dbReference>
<dbReference type="Pfam" id="PF00926">
    <property type="entry name" value="DHBP_synthase"/>
    <property type="match status" value="1"/>
</dbReference>
<dbReference type="Pfam" id="PF00925">
    <property type="entry name" value="GTP_cyclohydro2"/>
    <property type="match status" value="1"/>
</dbReference>
<dbReference type="PIRSF" id="PIRSF001259">
    <property type="entry name" value="RibA"/>
    <property type="match status" value="1"/>
</dbReference>
<dbReference type="SUPFAM" id="SSF142695">
    <property type="entry name" value="RibA-like"/>
    <property type="match status" value="1"/>
</dbReference>
<dbReference type="SUPFAM" id="SSF55821">
    <property type="entry name" value="YrdC/RibB"/>
    <property type="match status" value="1"/>
</dbReference>
<name>RIBB_HELHP</name>
<feature type="chain" id="PRO_0000151801" description="3,4-dihydroxy-2-butanone 4-phosphate synthase">
    <location>
        <begin position="1"/>
        <end position="355"/>
    </location>
</feature>
<feature type="region of interest" description="DHBP synthase">
    <location>
        <begin position="1"/>
        <end position="202"/>
    </location>
</feature>
<feature type="region of interest" description="GTP cyclohydrolase II-like">
    <location>
        <begin position="203"/>
        <end position="355"/>
    </location>
</feature>
<feature type="binding site" evidence="1">
    <location>
        <begin position="27"/>
        <end position="28"/>
    </location>
    <ligand>
        <name>D-ribulose 5-phosphate</name>
        <dbReference type="ChEBI" id="CHEBI:58121"/>
    </ligand>
</feature>
<feature type="binding site" evidence="1">
    <location>
        <position position="28"/>
    </location>
    <ligand>
        <name>Mg(2+)</name>
        <dbReference type="ChEBI" id="CHEBI:18420"/>
        <label>1</label>
    </ligand>
</feature>
<feature type="binding site" evidence="1">
    <location>
        <position position="28"/>
    </location>
    <ligand>
        <name>Mg(2+)</name>
        <dbReference type="ChEBI" id="CHEBI:18420"/>
        <label>2</label>
    </ligand>
</feature>
<feature type="binding site" evidence="1">
    <location>
        <position position="32"/>
    </location>
    <ligand>
        <name>D-ribulose 5-phosphate</name>
        <dbReference type="ChEBI" id="CHEBI:58121"/>
    </ligand>
</feature>
<feature type="binding site" evidence="1">
    <location>
        <begin position="139"/>
        <end position="143"/>
    </location>
    <ligand>
        <name>D-ribulose 5-phosphate</name>
        <dbReference type="ChEBI" id="CHEBI:58121"/>
    </ligand>
</feature>
<feature type="binding site" evidence="1">
    <location>
        <position position="142"/>
    </location>
    <ligand>
        <name>Mg(2+)</name>
        <dbReference type="ChEBI" id="CHEBI:18420"/>
        <label>2</label>
    </ligand>
</feature>
<feature type="binding site" evidence="1">
    <location>
        <position position="163"/>
    </location>
    <ligand>
        <name>D-ribulose 5-phosphate</name>
        <dbReference type="ChEBI" id="CHEBI:58121"/>
    </ligand>
</feature>
<feature type="site" description="Essential for catalytic activity" evidence="1">
    <location>
        <position position="125"/>
    </location>
</feature>
<feature type="site" description="Essential for catalytic activity" evidence="1">
    <location>
        <position position="163"/>
    </location>
</feature>
<evidence type="ECO:0000250" key="1"/>
<evidence type="ECO:0000305" key="2"/>
<accession>Q7VJN5</accession>
<sequence length="355" mass="39765">MYHKRIKEAIEAIKQGEMIIIMDDEDRENEGDLVMAGIFSSPQKINFMAQEARGLICVSITQELAQKLDLPPMVQKNDSNHETAFTISIDAKEAKTGISAFERDMTIRLMCESNTKPSDFVRPGHIFPLIAKEGGVLVRTGHTEASVDICRLAGVAPISVICEIMKKDGTMAGRGDKFLLDFASQHHLKILYVSDIIQYRLNFENLLREITRESAVFMGVECEKITFIDHLEREHIVFGFPHKGSSSNEPKPLIRFHNVRSDLELLQNAQEWNALLKSIECLKEKGGYLVFLNTHSEYANSSKTCGDIKDFGIGAQILKRLGIEDFVLLSSCGGSKGEYNALSGFNLHLVEKIEV</sequence>
<organism>
    <name type="scientific">Helicobacter hepaticus (strain ATCC 51449 / 3B1)</name>
    <dbReference type="NCBI Taxonomy" id="235279"/>
    <lineage>
        <taxon>Bacteria</taxon>
        <taxon>Pseudomonadati</taxon>
        <taxon>Campylobacterota</taxon>
        <taxon>Epsilonproteobacteria</taxon>
        <taxon>Campylobacterales</taxon>
        <taxon>Helicobacteraceae</taxon>
        <taxon>Helicobacter</taxon>
    </lineage>
</organism>
<proteinExistence type="inferred from homology"/>
<gene>
    <name type="primary">ribB</name>
    <name type="ordered locus">HH_0208</name>
</gene>
<comment type="function">
    <text evidence="1">Catalyzes the conversion of D-ribulose 5-phosphate to formate and 3,4-dihydroxy-2-butanone 4-phosphate.</text>
</comment>
<comment type="catalytic activity">
    <reaction>
        <text>D-ribulose 5-phosphate = (2S)-2-hydroxy-3-oxobutyl phosphate + formate + H(+)</text>
        <dbReference type="Rhea" id="RHEA:18457"/>
        <dbReference type="ChEBI" id="CHEBI:15378"/>
        <dbReference type="ChEBI" id="CHEBI:15740"/>
        <dbReference type="ChEBI" id="CHEBI:58121"/>
        <dbReference type="ChEBI" id="CHEBI:58830"/>
        <dbReference type="EC" id="4.1.99.12"/>
    </reaction>
</comment>
<comment type="cofactor">
    <cofactor evidence="1">
        <name>Mg(2+)</name>
        <dbReference type="ChEBI" id="CHEBI:18420"/>
    </cofactor>
    <cofactor evidence="1">
        <name>Mn(2+)</name>
        <dbReference type="ChEBI" id="CHEBI:29035"/>
    </cofactor>
    <text evidence="1">Binds 2 divalent metal cations per subunit. Magnesium or manganese.</text>
</comment>
<comment type="pathway">
    <text>Cofactor biosynthesis; riboflavin biosynthesis; 2-hydroxy-3-oxobutyl phosphate from D-ribulose 5-phosphate: step 1/1.</text>
</comment>
<comment type="similarity">
    <text evidence="2">In the N-terminal section; belongs to the DHBP synthase family.</text>
</comment>
<comment type="similarity">
    <text evidence="2">In the C-terminal section; belongs to the GTP cyclohydrolase II family.</text>
</comment>
<protein>
    <recommendedName>
        <fullName>3,4-dihydroxy-2-butanone 4-phosphate synthase</fullName>
        <shortName>DHBP synthase</shortName>
        <ecNumber>4.1.99.12</ecNumber>
    </recommendedName>
</protein>